<sequence length="152" mass="17315">MSTPARRRLMRDFKRLQEDPPAGVSGAPSENNIMVWNAVIFGPEGTPFEDGTFKLTIEFTEEYPNKPPTVRFVSKMFHPNVYADGSICLDILQNRWSPTYDVSSILTSIQSLLDEPNPNSPANSQAAQLYQENKREYEKRVSAIVEQSWRDC</sequence>
<comment type="function">
    <text evidence="1 6">E2 ubiquitin-conjugating enzyme that accepts ubiquitin from the ubiquitin-activating enzyme E1 and transfers it to a E3 ubiquitin-protein ligase (By similarity). In vitro catalyzes 'Lys-11', as well as 'Lys-48'-linked polyubiquitination (By similarity). Together with the E3 enzyme BRE1 (RNF20 and/or RNF40), plays a role in transcription regulation by catalyzing the monoubiquitination of histone H2B at 'Lys-120' to form H2BK120ub1 (By similarity). H2BK120ub1 gives a specific tag for epigenetic transcriptional activation, elongation by RNA polymerase II, telomeric silencing, and is also a prerequisite for H3K4me and H3K79me formation (By similarity). Involved in mitophagy by acting as a E2 ubiquitin-conjugating enzyme for PRKN (PubMed:23685073). In association with the E3 enzyme UBR4, is involved in N-end rule-dependent protein degradation (By similarity). In association with the E3 ubiquitin-protein ligase complex SIFI, inhibits the mitochondrial stress response by acting as a E2 ubiquitin-conjugating enzyme for UBR4 and KCMF1 (By similarity).</text>
</comment>
<comment type="catalytic activity">
    <reaction evidence="1 2 3">
        <text>S-ubiquitinyl-[E1 ubiquitin-activating enzyme]-L-cysteine + [E2 ubiquitin-conjugating enzyme]-L-cysteine = [E1 ubiquitin-activating enzyme]-L-cysteine + S-ubiquitinyl-[E2 ubiquitin-conjugating enzyme]-L-cysteine.</text>
        <dbReference type="EC" id="2.3.2.23"/>
    </reaction>
</comment>
<comment type="pathway">
    <text evidence="2">Protein modification; protein ubiquitination.</text>
</comment>
<comment type="subunit">
    <text evidence="1 4">Interacts with RAD18 and WAC (By similarity). Interacts with RFPL4A and CCNB1 (PubMed:12525704).</text>
</comment>
<comment type="subcellular location">
    <subcellularLocation>
        <location evidence="1">Late endosome</location>
    </subcellularLocation>
    <subcellularLocation>
        <location evidence="1">Lysosome</location>
    </subcellularLocation>
</comment>
<comment type="PTM">
    <text evidence="1">Phosphorylation at Ser-120 by CDK9 increases activity towards histone H2B.</text>
</comment>
<comment type="disruption phenotype">
    <text evidence="5">Male and female mice are normal and only display a small decrease in body weight (PubMed:15169909). Female mice are however infertile despite normal ovarian histology and ovulation: defects are caused by the absence of maternal Ube2a in oocytes that prevents development beyond the embryonic two-cell stage (PubMed:15169909). Male mice are fertile (PubMed:15169909).</text>
</comment>
<comment type="similarity">
    <text evidence="2">Belongs to the ubiquitin-conjugating enzyme family.</text>
</comment>
<name>UBE2A_MOUSE</name>
<feature type="chain" id="PRO_0000082446" description="Ubiquitin-conjugating enzyme E2 A">
    <location>
        <begin position="1"/>
        <end position="152"/>
    </location>
</feature>
<feature type="domain" description="UBC core" evidence="2">
    <location>
        <begin position="4"/>
        <end position="150"/>
    </location>
</feature>
<feature type="active site" description="Glycyl thioester intermediate" evidence="2 3">
    <location>
        <position position="88"/>
    </location>
</feature>
<feature type="modified residue" description="Phosphoserine; by CDK9" evidence="1">
    <location>
        <position position="120"/>
    </location>
</feature>
<gene>
    <name evidence="7 8" type="primary">Ube2a</name>
    <name evidence="7" type="synonym">Rad6a</name>
</gene>
<organism>
    <name type="scientific">Mus musculus</name>
    <name type="common">Mouse</name>
    <dbReference type="NCBI Taxonomy" id="10090"/>
    <lineage>
        <taxon>Eukaryota</taxon>
        <taxon>Metazoa</taxon>
        <taxon>Chordata</taxon>
        <taxon>Craniata</taxon>
        <taxon>Vertebrata</taxon>
        <taxon>Euteleostomi</taxon>
        <taxon>Mammalia</taxon>
        <taxon>Eutheria</taxon>
        <taxon>Euarchontoglires</taxon>
        <taxon>Glires</taxon>
        <taxon>Rodentia</taxon>
        <taxon>Myomorpha</taxon>
        <taxon>Muroidea</taxon>
        <taxon>Muridae</taxon>
        <taxon>Murinae</taxon>
        <taxon>Mus</taxon>
        <taxon>Mus</taxon>
    </lineage>
</organism>
<accession>Q9Z255</accession>
<evidence type="ECO:0000250" key="1">
    <source>
        <dbReference type="UniProtKB" id="P49459"/>
    </source>
</evidence>
<evidence type="ECO:0000255" key="2">
    <source>
        <dbReference type="PROSITE-ProRule" id="PRU00388"/>
    </source>
</evidence>
<evidence type="ECO:0000255" key="3">
    <source>
        <dbReference type="PROSITE-ProRule" id="PRU10133"/>
    </source>
</evidence>
<evidence type="ECO:0000269" key="4">
    <source>
    </source>
</evidence>
<evidence type="ECO:0000269" key="5">
    <source>
    </source>
</evidence>
<evidence type="ECO:0000269" key="6">
    <source>
    </source>
</evidence>
<evidence type="ECO:0000303" key="7">
    <source>
    </source>
</evidence>
<evidence type="ECO:0000312" key="8">
    <source>
        <dbReference type="MGI" id="MGI:102959"/>
    </source>
</evidence>
<dbReference type="EC" id="2.3.2.23" evidence="1"/>
<dbReference type="EMBL" id="AF089812">
    <property type="protein sequence ID" value="AAC64563.1"/>
    <property type="molecule type" value="mRNA"/>
</dbReference>
<dbReference type="EMBL" id="AF383148">
    <property type="protein sequence ID" value="AAK62984.1"/>
    <property type="molecule type" value="mRNA"/>
</dbReference>
<dbReference type="EMBL" id="BC026053">
    <property type="protein sequence ID" value="AAH26053.1"/>
    <property type="molecule type" value="mRNA"/>
</dbReference>
<dbReference type="CCDS" id="CCDS30064.1"/>
<dbReference type="RefSeq" id="NP_062642.1">
    <property type="nucleotide sequence ID" value="NM_019668.4"/>
</dbReference>
<dbReference type="SMR" id="Q9Z255"/>
<dbReference type="BioGRID" id="204414">
    <property type="interactions" value="10"/>
</dbReference>
<dbReference type="FunCoup" id="Q9Z255">
    <property type="interactions" value="1941"/>
</dbReference>
<dbReference type="STRING" id="10090.ENSMUSP00000016452"/>
<dbReference type="iPTMnet" id="Q9Z255"/>
<dbReference type="PhosphoSitePlus" id="Q9Z255"/>
<dbReference type="SwissPalm" id="Q9Z255"/>
<dbReference type="PaxDb" id="10090-ENSMUSP00000016452"/>
<dbReference type="ProteomicsDB" id="298179"/>
<dbReference type="Pumba" id="Q9Z255"/>
<dbReference type="Antibodypedia" id="29799">
    <property type="antibodies" value="209 antibodies from 28 providers"/>
</dbReference>
<dbReference type="DNASU" id="22209"/>
<dbReference type="Ensembl" id="ENSMUST00000016452.11">
    <property type="protein sequence ID" value="ENSMUSP00000016452.8"/>
    <property type="gene ID" value="ENSMUSG00000016308.14"/>
</dbReference>
<dbReference type="GeneID" id="22209"/>
<dbReference type="KEGG" id="mmu:22209"/>
<dbReference type="UCSC" id="uc009sxv.1">
    <property type="organism name" value="mouse"/>
</dbReference>
<dbReference type="AGR" id="MGI:102959"/>
<dbReference type="CTD" id="7319"/>
<dbReference type="MGI" id="MGI:102959">
    <property type="gene designation" value="Ube2a"/>
</dbReference>
<dbReference type="VEuPathDB" id="HostDB:ENSMUSG00000016308"/>
<dbReference type="eggNOG" id="KOG0419">
    <property type="taxonomic scope" value="Eukaryota"/>
</dbReference>
<dbReference type="GeneTree" id="ENSGT00940000155075"/>
<dbReference type="HOGENOM" id="CLU_030988_10_2_1"/>
<dbReference type="InParanoid" id="Q9Z255"/>
<dbReference type="OMA" id="DHKSQYI"/>
<dbReference type="OrthoDB" id="6438at9989"/>
<dbReference type="PhylomeDB" id="Q9Z255"/>
<dbReference type="TreeFam" id="TF101128"/>
<dbReference type="Reactome" id="R-MMU-8866652">
    <property type="pathway name" value="Synthesis of active ubiquitin: roles of E1 and E2 enzymes"/>
</dbReference>
<dbReference type="Reactome" id="R-MMU-8866654">
    <property type="pathway name" value="E3 ubiquitin ligases ubiquitinate target proteins"/>
</dbReference>
<dbReference type="Reactome" id="R-MMU-983168">
    <property type="pathway name" value="Antigen processing: Ubiquitination &amp; Proteasome degradation"/>
</dbReference>
<dbReference type="UniPathway" id="UPA00143"/>
<dbReference type="BioGRID-ORCS" id="22209">
    <property type="hits" value="17 hits in 119 CRISPR screens"/>
</dbReference>
<dbReference type="ChiTaRS" id="Ube2a">
    <property type="organism name" value="mouse"/>
</dbReference>
<dbReference type="PRO" id="PR:Q9Z255"/>
<dbReference type="Proteomes" id="UP000000589">
    <property type="component" value="Chromosome X"/>
</dbReference>
<dbReference type="RNAct" id="Q9Z255">
    <property type="molecule type" value="protein"/>
</dbReference>
<dbReference type="Bgee" id="ENSMUSG00000016308">
    <property type="expression patterns" value="Expressed in placenta labyrinth and 266 other cell types or tissues"/>
</dbReference>
<dbReference type="ExpressionAtlas" id="Q9Z255">
    <property type="expression patterns" value="baseline and differential"/>
</dbReference>
<dbReference type="GO" id="GO:0000785">
    <property type="term" value="C:chromatin"/>
    <property type="evidence" value="ECO:0000314"/>
    <property type="project" value="MGI"/>
</dbReference>
<dbReference type="GO" id="GO:0033503">
    <property type="term" value="C:HULC complex"/>
    <property type="evidence" value="ECO:0000250"/>
    <property type="project" value="UniProtKB"/>
</dbReference>
<dbReference type="GO" id="GO:0005770">
    <property type="term" value="C:late endosome"/>
    <property type="evidence" value="ECO:0007669"/>
    <property type="project" value="UniProtKB-SubCell"/>
</dbReference>
<dbReference type="GO" id="GO:0005764">
    <property type="term" value="C:lysosome"/>
    <property type="evidence" value="ECO:0007669"/>
    <property type="project" value="UniProtKB-SubCell"/>
</dbReference>
<dbReference type="GO" id="GO:0001741">
    <property type="term" value="C:XY body"/>
    <property type="evidence" value="ECO:0000314"/>
    <property type="project" value="MGI"/>
</dbReference>
<dbReference type="GO" id="GO:0005524">
    <property type="term" value="F:ATP binding"/>
    <property type="evidence" value="ECO:0007669"/>
    <property type="project" value="UniProtKB-KW"/>
</dbReference>
<dbReference type="GO" id="GO:0061631">
    <property type="term" value="F:ubiquitin conjugating enzyme activity"/>
    <property type="evidence" value="ECO:0000316"/>
    <property type="project" value="MGI"/>
</dbReference>
<dbReference type="GO" id="GO:0031625">
    <property type="term" value="F:ubiquitin protein ligase binding"/>
    <property type="evidence" value="ECO:0000314"/>
    <property type="project" value="MGI"/>
</dbReference>
<dbReference type="GO" id="GO:0004842">
    <property type="term" value="F:ubiquitin-protein transferase activity"/>
    <property type="evidence" value="ECO:0000250"/>
    <property type="project" value="UniProtKB"/>
</dbReference>
<dbReference type="GO" id="GO:0001835">
    <property type="term" value="P:blastocyst hatching"/>
    <property type="evidence" value="ECO:0000315"/>
    <property type="project" value="MGI"/>
</dbReference>
<dbReference type="GO" id="GO:0006281">
    <property type="term" value="P:DNA repair"/>
    <property type="evidence" value="ECO:0007669"/>
    <property type="project" value="UniProtKB-KW"/>
</dbReference>
<dbReference type="GO" id="GO:0001701">
    <property type="term" value="P:in utero embryonic development"/>
    <property type="evidence" value="ECO:0000316"/>
    <property type="project" value="MGI"/>
</dbReference>
<dbReference type="GO" id="GO:0060135">
    <property type="term" value="P:maternal process involved in female pregnancy"/>
    <property type="evidence" value="ECO:0000315"/>
    <property type="project" value="MGI"/>
</dbReference>
<dbReference type="GO" id="GO:1901526">
    <property type="term" value="P:positive regulation of mitophagy"/>
    <property type="evidence" value="ECO:0000315"/>
    <property type="project" value="UniProtKB"/>
</dbReference>
<dbReference type="GO" id="GO:0070979">
    <property type="term" value="P:protein K11-linked ubiquitination"/>
    <property type="evidence" value="ECO:0000250"/>
    <property type="project" value="UniProtKB"/>
</dbReference>
<dbReference type="GO" id="GO:0070936">
    <property type="term" value="P:protein K48-linked ubiquitination"/>
    <property type="evidence" value="ECO:0000250"/>
    <property type="project" value="UniProtKB"/>
</dbReference>
<dbReference type="GO" id="GO:0016567">
    <property type="term" value="P:protein ubiquitination"/>
    <property type="evidence" value="ECO:0000314"/>
    <property type="project" value="MGI"/>
</dbReference>
<dbReference type="CDD" id="cd23790">
    <property type="entry name" value="UBCc_UBE2A_2B"/>
    <property type="match status" value="1"/>
</dbReference>
<dbReference type="FunFam" id="3.10.110.10:FF:000062">
    <property type="entry name" value="Ubiquitin-conjugating enzyme E2 B"/>
    <property type="match status" value="1"/>
</dbReference>
<dbReference type="Gene3D" id="3.10.110.10">
    <property type="entry name" value="Ubiquitin Conjugating Enzyme"/>
    <property type="match status" value="1"/>
</dbReference>
<dbReference type="InterPro" id="IPR050113">
    <property type="entry name" value="Ub_conjugating_enzyme"/>
</dbReference>
<dbReference type="InterPro" id="IPR000608">
    <property type="entry name" value="UBQ-conjugat_E2_core"/>
</dbReference>
<dbReference type="InterPro" id="IPR023313">
    <property type="entry name" value="UBQ-conjugating_AS"/>
</dbReference>
<dbReference type="InterPro" id="IPR016135">
    <property type="entry name" value="UBQ-conjugating_enzyme/RWD"/>
</dbReference>
<dbReference type="PANTHER" id="PTHR24067">
    <property type="entry name" value="UBIQUITIN-CONJUGATING ENZYME E2"/>
    <property type="match status" value="1"/>
</dbReference>
<dbReference type="Pfam" id="PF00179">
    <property type="entry name" value="UQ_con"/>
    <property type="match status" value="1"/>
</dbReference>
<dbReference type="SMART" id="SM00212">
    <property type="entry name" value="UBCc"/>
    <property type="match status" value="1"/>
</dbReference>
<dbReference type="SUPFAM" id="SSF54495">
    <property type="entry name" value="UBC-like"/>
    <property type="match status" value="1"/>
</dbReference>
<dbReference type="PROSITE" id="PS00183">
    <property type="entry name" value="UBC_1"/>
    <property type="match status" value="1"/>
</dbReference>
<dbReference type="PROSITE" id="PS50127">
    <property type="entry name" value="UBC_2"/>
    <property type="match status" value="1"/>
</dbReference>
<protein>
    <recommendedName>
        <fullName>Ubiquitin-conjugating enzyme E2 A</fullName>
        <ecNumber evidence="1">2.3.2.23</ecNumber>
    </recommendedName>
    <alternativeName>
        <fullName>E2 ubiquitin-conjugating enzyme A</fullName>
    </alternativeName>
    <alternativeName>
        <fullName evidence="7">RAD6 homolog A</fullName>
        <shortName evidence="7">HR6A</shortName>
        <shortName evidence="7">mHR6A</shortName>
    </alternativeName>
    <alternativeName>
        <fullName>Ubiquitin carrier protein A</fullName>
    </alternativeName>
    <alternativeName>
        <fullName>Ubiquitin-protein ligase A</fullName>
    </alternativeName>
</protein>
<reference key="1">
    <citation type="submission" date="1998-08" db="EMBL/GenBank/DDBJ databases">
        <title>Isolation of mHR6A, a gene highly homologous to the male fertility gene mHR6B.</title>
        <authorList>
            <person name="Roest H.P."/>
            <person name="van Klaveren J."/>
            <person name="Koken M.H.M."/>
            <person name="Vermey M."/>
            <person name="van Cappellen W.A."/>
            <person name="Baarends W.M."/>
            <person name="Hoogerbrugge J.W."/>
            <person name="Bootsma D."/>
            <person name="Hoeijmakers J.H.J."/>
            <person name="Grootegoed J.A."/>
            <person name="de Wit J."/>
        </authorList>
    </citation>
    <scope>NUCLEOTIDE SEQUENCE [MRNA]</scope>
    <source>
        <strain>BCBA</strain>
        <tissue>Brain</tissue>
    </source>
</reference>
<reference key="2">
    <citation type="submission" date="2001-05" db="EMBL/GenBank/DDBJ databases">
        <authorList>
            <person name="Kwon Y.T."/>
            <person name="Varshavsky A."/>
        </authorList>
    </citation>
    <scope>NUCLEOTIDE SEQUENCE [MRNA]</scope>
    <source>
        <strain>C57BL/6J</strain>
        <tissue>Skeletal muscle</tissue>
    </source>
</reference>
<reference key="3">
    <citation type="journal article" date="2004" name="Genome Res.">
        <title>The status, quality, and expansion of the NIH full-length cDNA project: the Mammalian Gene Collection (MGC).</title>
        <authorList>
            <consortium name="The MGC Project Team"/>
        </authorList>
    </citation>
    <scope>NUCLEOTIDE SEQUENCE [LARGE SCALE MRNA]</scope>
</reference>
<reference key="4">
    <citation type="journal article" date="2003" name="Proc. Natl. Acad. Sci. U.S.A.">
        <title>RFPL4 interacts with oocyte proteins of the ubiquitin-proteasome degradation pathway.</title>
        <authorList>
            <person name="Suzumori N."/>
            <person name="Burns K.H."/>
            <person name="Yan W."/>
            <person name="Matzuk M.M."/>
        </authorList>
    </citation>
    <scope>INTERACTION WITH RFPL4A AND CCNB1</scope>
</reference>
<reference key="5">
    <citation type="journal article" date="2004" name="Mol. Cell. Biol.">
        <title>The ubiquitin-conjugating DNA repair enzyme HR6A is a maternal factor essential for early embryonic development in mice.</title>
        <authorList>
            <person name="Roest H.P."/>
            <person name="Baarends W.M."/>
            <person name="de Wit J."/>
            <person name="van Klaveren J.W."/>
            <person name="Wassenaar E."/>
            <person name="Hoogerbrugge J.W."/>
            <person name="van Cappellen W.A."/>
            <person name="Hoeijmakers J.H."/>
            <person name="Grootegoed J.A."/>
        </authorList>
    </citation>
    <scope>DISRUPTION PHENOTYPE</scope>
</reference>
<reference key="6">
    <citation type="journal article" date="2010" name="Cell">
        <title>A tissue-specific atlas of mouse protein phosphorylation and expression.</title>
        <authorList>
            <person name="Huttlin E.L."/>
            <person name="Jedrychowski M.P."/>
            <person name="Elias J.E."/>
            <person name="Goswami T."/>
            <person name="Rad R."/>
            <person name="Beausoleil S.A."/>
            <person name="Villen J."/>
            <person name="Haas W."/>
            <person name="Sowa M.E."/>
            <person name="Gygi S.P."/>
        </authorList>
    </citation>
    <scope>IDENTIFICATION BY MASS SPECTROMETRY [LARGE SCALE ANALYSIS]</scope>
    <source>
        <tissue>Brain</tissue>
        <tissue>Lung</tissue>
        <tissue>Pancreas</tissue>
        <tissue>Testis</tissue>
    </source>
</reference>
<reference key="7">
    <citation type="journal article" date="2013" name="Mol. Cell">
        <title>Mutations in the intellectual disability gene Ube2a cause neuronal dysfunction and impair parkin-dependent mitophagy.</title>
        <authorList>
            <person name="Haddad D.M."/>
            <person name="Vilain S."/>
            <person name="Vos M."/>
            <person name="Esposito G."/>
            <person name="Matta S."/>
            <person name="Kalscheuer V.M."/>
            <person name="Craessaerts K."/>
            <person name="Leyssen M."/>
            <person name="Nascimento R.M."/>
            <person name="Vianna-Morgante A.M."/>
            <person name="De Strooper B."/>
            <person name="Van Esch H."/>
            <person name="Morais V.A."/>
            <person name="Verstreken P."/>
        </authorList>
    </citation>
    <scope>FUNCTION</scope>
</reference>
<proteinExistence type="evidence at protein level"/>
<keyword id="KW-0067">ATP-binding</keyword>
<keyword id="KW-0227">DNA damage</keyword>
<keyword id="KW-0234">DNA repair</keyword>
<keyword id="KW-0967">Endosome</keyword>
<keyword id="KW-0458">Lysosome</keyword>
<keyword id="KW-0547">Nucleotide-binding</keyword>
<keyword id="KW-0597">Phosphoprotein</keyword>
<keyword id="KW-1185">Reference proteome</keyword>
<keyword id="KW-0808">Transferase</keyword>
<keyword id="KW-0833">Ubl conjugation pathway</keyword>